<gene>
    <name type="primary">RpL8</name>
</gene>
<evidence type="ECO:0000256" key="1">
    <source>
        <dbReference type="SAM" id="MobiDB-lite"/>
    </source>
</evidence>
<evidence type="ECO:0000305" key="2"/>
<reference key="1">
    <citation type="submission" date="2003-11" db="EMBL/GenBank/DDBJ databases">
        <title>Molecular cloning of a ribosomal protein L8 in the cabbage armyworm Mamestra brassicae.</title>
        <authorList>
            <person name="Maibeche-Coisne M."/>
            <person name="Francois M.-C."/>
            <person name="Merlin C."/>
            <person name="Jacquin-Joly E."/>
        </authorList>
    </citation>
    <scope>NUCLEOTIDE SEQUENCE [MRNA]</scope>
</reference>
<organism>
    <name type="scientific">Mamestra brassicae</name>
    <name type="common">Cabbage moth</name>
    <dbReference type="NCBI Taxonomy" id="55057"/>
    <lineage>
        <taxon>Eukaryota</taxon>
        <taxon>Metazoa</taxon>
        <taxon>Ecdysozoa</taxon>
        <taxon>Arthropoda</taxon>
        <taxon>Hexapoda</taxon>
        <taxon>Insecta</taxon>
        <taxon>Pterygota</taxon>
        <taxon>Neoptera</taxon>
        <taxon>Endopterygota</taxon>
        <taxon>Lepidoptera</taxon>
        <taxon>Glossata</taxon>
        <taxon>Ditrysia</taxon>
        <taxon>Noctuoidea</taxon>
        <taxon>Noctuidae</taxon>
        <taxon>Hadeninae</taxon>
        <taxon>Mamestra</taxon>
    </lineage>
</organism>
<sequence>MGRVIRAQRKGAGSVFVSHTKKRKGAPKLRSLDYAERHGYIKGVVKDIIHDPGRGAPLAVVHFRDPYKFKTRKELFIAPEGLYTGQFVYCGKKATLEVGNVMPVGAMPEGTIVCNLEEKMGDRGRLARASGNFATVIGHNPDAKRTRVKLPSGAKKVLPSSNRGMVGIVAGGGRIDKPILKAGRAYHKYKVKRNCWPYVRGVAMNPVEHPHGGGNHQHIGKASTVKRGTSAGRKVGLIAARRTGRIRGGKTDTKKET</sequence>
<feature type="chain" id="PRO_0000129755" description="Large ribosomal subunit protein uL2">
    <location>
        <begin position="1"/>
        <end position="257"/>
    </location>
</feature>
<feature type="region of interest" description="Disordered" evidence="1">
    <location>
        <begin position="210"/>
        <end position="231"/>
    </location>
</feature>
<comment type="subcellular location">
    <subcellularLocation>
        <location>Cytoplasm</location>
    </subcellularLocation>
</comment>
<comment type="similarity">
    <text evidence="2">Belongs to the universal ribosomal protein uL2 family.</text>
</comment>
<accession>Q6RYS3</accession>
<protein>
    <recommendedName>
        <fullName evidence="2">Large ribosomal subunit protein uL2</fullName>
    </recommendedName>
    <alternativeName>
        <fullName>60S ribosomal protein L8</fullName>
    </alternativeName>
</protein>
<proteinExistence type="evidence at transcript level"/>
<dbReference type="EMBL" id="AY485337">
    <property type="protein sequence ID" value="AAR36138.1"/>
    <property type="molecule type" value="mRNA"/>
</dbReference>
<dbReference type="SMR" id="Q6RYS3"/>
<dbReference type="OrthoDB" id="10267824at2759"/>
<dbReference type="GO" id="GO:0022625">
    <property type="term" value="C:cytosolic large ribosomal subunit"/>
    <property type="evidence" value="ECO:0007669"/>
    <property type="project" value="TreeGrafter"/>
</dbReference>
<dbReference type="GO" id="GO:0019843">
    <property type="term" value="F:rRNA binding"/>
    <property type="evidence" value="ECO:0007669"/>
    <property type="project" value="UniProtKB-KW"/>
</dbReference>
<dbReference type="GO" id="GO:0003735">
    <property type="term" value="F:structural constituent of ribosome"/>
    <property type="evidence" value="ECO:0007669"/>
    <property type="project" value="InterPro"/>
</dbReference>
<dbReference type="GO" id="GO:0002181">
    <property type="term" value="P:cytoplasmic translation"/>
    <property type="evidence" value="ECO:0007669"/>
    <property type="project" value="TreeGrafter"/>
</dbReference>
<dbReference type="FunFam" id="2.40.50.140:FF:000020">
    <property type="entry name" value="60S ribosomal protein L2"/>
    <property type="match status" value="1"/>
</dbReference>
<dbReference type="FunFam" id="4.10.950.10:FF:000002">
    <property type="entry name" value="60S ribosomal protein L2"/>
    <property type="match status" value="1"/>
</dbReference>
<dbReference type="FunFam" id="2.30.30.30:FF:000006">
    <property type="entry name" value="60S ribosomal protein L8"/>
    <property type="match status" value="1"/>
</dbReference>
<dbReference type="Gene3D" id="2.30.30.30">
    <property type="match status" value="1"/>
</dbReference>
<dbReference type="Gene3D" id="2.40.50.140">
    <property type="entry name" value="Nucleic acid-binding proteins"/>
    <property type="match status" value="1"/>
</dbReference>
<dbReference type="Gene3D" id="4.10.950.10">
    <property type="entry name" value="Ribosomal protein L2, domain 3"/>
    <property type="match status" value="1"/>
</dbReference>
<dbReference type="InterPro" id="IPR012340">
    <property type="entry name" value="NA-bd_OB-fold"/>
</dbReference>
<dbReference type="InterPro" id="IPR014722">
    <property type="entry name" value="Rib_uL2_dom2"/>
</dbReference>
<dbReference type="InterPro" id="IPR002171">
    <property type="entry name" value="Ribosomal_uL2"/>
</dbReference>
<dbReference type="InterPro" id="IPR023672">
    <property type="entry name" value="Ribosomal_uL2_arc_euk"/>
</dbReference>
<dbReference type="InterPro" id="IPR022669">
    <property type="entry name" value="Ribosomal_uL2_C"/>
</dbReference>
<dbReference type="InterPro" id="IPR022671">
    <property type="entry name" value="Ribosomal_uL2_CS"/>
</dbReference>
<dbReference type="InterPro" id="IPR014726">
    <property type="entry name" value="Ribosomal_uL2_dom3"/>
</dbReference>
<dbReference type="InterPro" id="IPR022666">
    <property type="entry name" value="Ribosomal_uL2_RNA-bd_dom"/>
</dbReference>
<dbReference type="InterPro" id="IPR008991">
    <property type="entry name" value="Translation_prot_SH3-like_sf"/>
</dbReference>
<dbReference type="NCBIfam" id="NF007180">
    <property type="entry name" value="PRK09612.1"/>
    <property type="match status" value="1"/>
</dbReference>
<dbReference type="PANTHER" id="PTHR13691:SF16">
    <property type="entry name" value="LARGE RIBOSOMAL SUBUNIT PROTEIN UL2"/>
    <property type="match status" value="1"/>
</dbReference>
<dbReference type="PANTHER" id="PTHR13691">
    <property type="entry name" value="RIBOSOMAL PROTEIN L2"/>
    <property type="match status" value="1"/>
</dbReference>
<dbReference type="Pfam" id="PF00181">
    <property type="entry name" value="Ribosomal_L2"/>
    <property type="match status" value="1"/>
</dbReference>
<dbReference type="Pfam" id="PF03947">
    <property type="entry name" value="Ribosomal_L2_C"/>
    <property type="match status" value="1"/>
</dbReference>
<dbReference type="PIRSF" id="PIRSF002158">
    <property type="entry name" value="Ribosomal_L2"/>
    <property type="match status" value="1"/>
</dbReference>
<dbReference type="SMART" id="SM01383">
    <property type="entry name" value="Ribosomal_L2"/>
    <property type="match status" value="1"/>
</dbReference>
<dbReference type="SMART" id="SM01382">
    <property type="entry name" value="Ribosomal_L2_C"/>
    <property type="match status" value="1"/>
</dbReference>
<dbReference type="SUPFAM" id="SSF50249">
    <property type="entry name" value="Nucleic acid-binding proteins"/>
    <property type="match status" value="1"/>
</dbReference>
<dbReference type="SUPFAM" id="SSF50104">
    <property type="entry name" value="Translation proteins SH3-like domain"/>
    <property type="match status" value="1"/>
</dbReference>
<dbReference type="PROSITE" id="PS00467">
    <property type="entry name" value="RIBOSOMAL_L2"/>
    <property type="match status" value="1"/>
</dbReference>
<name>RL8_MAMBR</name>
<keyword id="KW-0963">Cytoplasm</keyword>
<keyword id="KW-0687">Ribonucleoprotein</keyword>
<keyword id="KW-0689">Ribosomal protein</keyword>
<keyword id="KW-0694">RNA-binding</keyword>
<keyword id="KW-0699">rRNA-binding</keyword>